<feature type="chain" id="PRO_1000115502" description="Trigger factor">
    <location>
        <begin position="1"/>
        <end position="448"/>
    </location>
</feature>
<feature type="domain" description="PPIase FKBP-type" evidence="1">
    <location>
        <begin position="167"/>
        <end position="253"/>
    </location>
</feature>
<organism>
    <name type="scientific">Borrelia duttonii (strain Ly)</name>
    <dbReference type="NCBI Taxonomy" id="412419"/>
    <lineage>
        <taxon>Bacteria</taxon>
        <taxon>Pseudomonadati</taxon>
        <taxon>Spirochaetota</taxon>
        <taxon>Spirochaetia</taxon>
        <taxon>Spirochaetales</taxon>
        <taxon>Borreliaceae</taxon>
        <taxon>Borrelia</taxon>
    </lineage>
</organism>
<keyword id="KW-0131">Cell cycle</keyword>
<keyword id="KW-0132">Cell division</keyword>
<keyword id="KW-0143">Chaperone</keyword>
<keyword id="KW-0963">Cytoplasm</keyword>
<keyword id="KW-0413">Isomerase</keyword>
<keyword id="KW-0697">Rotamase</keyword>
<comment type="function">
    <text evidence="1">Involved in protein export. Acts as a chaperone by maintaining the newly synthesized protein in an open conformation. Functions as a peptidyl-prolyl cis-trans isomerase.</text>
</comment>
<comment type="catalytic activity">
    <reaction evidence="1">
        <text>[protein]-peptidylproline (omega=180) = [protein]-peptidylproline (omega=0)</text>
        <dbReference type="Rhea" id="RHEA:16237"/>
        <dbReference type="Rhea" id="RHEA-COMP:10747"/>
        <dbReference type="Rhea" id="RHEA-COMP:10748"/>
        <dbReference type="ChEBI" id="CHEBI:83833"/>
        <dbReference type="ChEBI" id="CHEBI:83834"/>
        <dbReference type="EC" id="5.2.1.8"/>
    </reaction>
</comment>
<comment type="subcellular location">
    <subcellularLocation>
        <location>Cytoplasm</location>
    </subcellularLocation>
    <text evidence="1">About half TF is bound to the ribosome near the polypeptide exit tunnel while the other half is free in the cytoplasm.</text>
</comment>
<comment type="domain">
    <text evidence="1">Consists of 3 domains; the N-terminus binds the ribosome, the middle domain has PPIase activity, while the C-terminus has intrinsic chaperone activity on its own.</text>
</comment>
<comment type="similarity">
    <text evidence="1">Belongs to the FKBP-type PPIase family. Tig subfamily.</text>
</comment>
<protein>
    <recommendedName>
        <fullName evidence="1">Trigger factor</fullName>
        <shortName evidence="1">TF</shortName>
        <ecNumber evidence="1">5.2.1.8</ecNumber>
    </recommendedName>
    <alternativeName>
        <fullName evidence="1">PPIase</fullName>
    </alternativeName>
</protein>
<name>TIG_BORDL</name>
<proteinExistence type="inferred from homology"/>
<sequence length="448" mass="51654">MILTSNVKLMPGSKVEAVIQISKEFVKAKYNEILKDYSSRLKVKGFRTGRVPFSIIEGKYSDNIRALAIENLIHKSLEEFFESAIYKPLSYAVPKILDEKLEINFDKDFEFTFVYESYPEFEISDISNFKVEIPEVVISDSDIEDELKLLQFENSIIVEDNGSVKVGSIVRVDFVELDDSLNEILATKRQDFVLTVGESDDYYGFGYDIIGMKKDEEKIVEKNYGSDYKFSELANTSKRLKIGVKDIKRRDIPELDDAFAKDVKDSLNTLEDLRDYVRENMLKVVQEKTNSLKLSKLLSGIAEKVNIDVPSSMFEAELKNVINEFSHQNKINITQLQNSSTGLEGVNDVFKENVLNKLKSKLVFQKMVDNDSSEVTELDLENELIKQAQNLKMAPQDVKKFYKERNLFGLLKDEIKRQKVKEKILQDLEEIKLEKVSFRDFVNYKTGE</sequence>
<dbReference type="EC" id="5.2.1.8" evidence="1"/>
<dbReference type="EMBL" id="CP000976">
    <property type="protein sequence ID" value="ACH93546.1"/>
    <property type="molecule type" value="Genomic_DNA"/>
</dbReference>
<dbReference type="RefSeq" id="WP_012538355.1">
    <property type="nucleotide sequence ID" value="NC_011229.1"/>
</dbReference>
<dbReference type="SMR" id="B5RMG0"/>
<dbReference type="STRING" id="412419.BDU_613"/>
<dbReference type="KEGG" id="bdu:BDU_613"/>
<dbReference type="eggNOG" id="COG0544">
    <property type="taxonomic scope" value="Bacteria"/>
</dbReference>
<dbReference type="HOGENOM" id="CLU_033058_3_2_12"/>
<dbReference type="OrthoDB" id="9767721at2"/>
<dbReference type="Proteomes" id="UP000000611">
    <property type="component" value="Chromosome"/>
</dbReference>
<dbReference type="GO" id="GO:0005737">
    <property type="term" value="C:cytoplasm"/>
    <property type="evidence" value="ECO:0007669"/>
    <property type="project" value="UniProtKB-SubCell"/>
</dbReference>
<dbReference type="GO" id="GO:0003755">
    <property type="term" value="F:peptidyl-prolyl cis-trans isomerase activity"/>
    <property type="evidence" value="ECO:0007669"/>
    <property type="project" value="UniProtKB-UniRule"/>
</dbReference>
<dbReference type="GO" id="GO:0051301">
    <property type="term" value="P:cell division"/>
    <property type="evidence" value="ECO:0007669"/>
    <property type="project" value="UniProtKB-KW"/>
</dbReference>
<dbReference type="GO" id="GO:0006457">
    <property type="term" value="P:protein folding"/>
    <property type="evidence" value="ECO:0007669"/>
    <property type="project" value="UniProtKB-UniRule"/>
</dbReference>
<dbReference type="GO" id="GO:0015031">
    <property type="term" value="P:protein transport"/>
    <property type="evidence" value="ECO:0007669"/>
    <property type="project" value="UniProtKB-UniRule"/>
</dbReference>
<dbReference type="Gene3D" id="3.10.50.40">
    <property type="match status" value="1"/>
</dbReference>
<dbReference type="Gene3D" id="3.30.70.1050">
    <property type="entry name" value="Trigger factor ribosome-binding domain"/>
    <property type="match status" value="1"/>
</dbReference>
<dbReference type="Gene3D" id="1.10.3120.10">
    <property type="entry name" value="Trigger factor, C-terminal domain"/>
    <property type="match status" value="1"/>
</dbReference>
<dbReference type="HAMAP" id="MF_00303">
    <property type="entry name" value="Trigger_factor_Tig"/>
    <property type="match status" value="1"/>
</dbReference>
<dbReference type="InterPro" id="IPR046357">
    <property type="entry name" value="PPIase_dom_sf"/>
</dbReference>
<dbReference type="InterPro" id="IPR005215">
    <property type="entry name" value="Trig_fac"/>
</dbReference>
<dbReference type="InterPro" id="IPR008880">
    <property type="entry name" value="Trigger_fac_C"/>
</dbReference>
<dbReference type="InterPro" id="IPR037041">
    <property type="entry name" value="Trigger_fac_C_sf"/>
</dbReference>
<dbReference type="InterPro" id="IPR008881">
    <property type="entry name" value="Trigger_fac_ribosome-bd_bac"/>
</dbReference>
<dbReference type="InterPro" id="IPR036611">
    <property type="entry name" value="Trigger_fac_ribosome-bd_sf"/>
</dbReference>
<dbReference type="InterPro" id="IPR027304">
    <property type="entry name" value="Trigger_fact/SurA_dom_sf"/>
</dbReference>
<dbReference type="NCBIfam" id="TIGR00115">
    <property type="entry name" value="tig"/>
    <property type="match status" value="1"/>
</dbReference>
<dbReference type="Pfam" id="PF05698">
    <property type="entry name" value="Trigger_C"/>
    <property type="match status" value="1"/>
</dbReference>
<dbReference type="Pfam" id="PF05697">
    <property type="entry name" value="Trigger_N"/>
    <property type="match status" value="1"/>
</dbReference>
<dbReference type="PIRSF" id="PIRSF003095">
    <property type="entry name" value="Trigger_factor"/>
    <property type="match status" value="1"/>
</dbReference>
<dbReference type="SUPFAM" id="SSF54534">
    <property type="entry name" value="FKBP-like"/>
    <property type="match status" value="1"/>
</dbReference>
<dbReference type="SUPFAM" id="SSF109998">
    <property type="entry name" value="Triger factor/SurA peptide-binding domain-like"/>
    <property type="match status" value="1"/>
</dbReference>
<dbReference type="SUPFAM" id="SSF102735">
    <property type="entry name" value="Trigger factor ribosome-binding domain"/>
    <property type="match status" value="1"/>
</dbReference>
<reference key="1">
    <citation type="journal article" date="2008" name="PLoS Genet.">
        <title>The genome of Borrelia recurrentis, the agent of deadly louse-borne relapsing fever, is a degraded subset of tick-borne Borrelia duttonii.</title>
        <authorList>
            <person name="Lescot M."/>
            <person name="Audic S."/>
            <person name="Robert C."/>
            <person name="Nguyen T.T."/>
            <person name="Blanc G."/>
            <person name="Cutler S.J."/>
            <person name="Wincker P."/>
            <person name="Couloux A."/>
            <person name="Claverie J.-M."/>
            <person name="Raoult D."/>
            <person name="Drancourt M."/>
        </authorList>
    </citation>
    <scope>NUCLEOTIDE SEQUENCE [LARGE SCALE GENOMIC DNA]</scope>
    <source>
        <strain>Ly</strain>
    </source>
</reference>
<evidence type="ECO:0000255" key="1">
    <source>
        <dbReference type="HAMAP-Rule" id="MF_00303"/>
    </source>
</evidence>
<gene>
    <name evidence="1" type="primary">tig</name>
    <name type="ordered locus">BDU_613</name>
</gene>
<accession>B5RMG0</accession>